<comment type="subcellular location">
    <subcellularLocation>
        <location>Cytoplasm</location>
    </subcellularLocation>
</comment>
<comment type="induction">
    <text>In response to low temperature and salt stress.</text>
</comment>
<comment type="similarity">
    <text evidence="2">Belongs to the CAPAB/TerDEXZ family.</text>
</comment>
<name>SCP2_BACSU</name>
<gene>
    <name type="primary">yceC</name>
    <name type="ordered locus">BSU02890</name>
</gene>
<accession>P81100</accession>
<sequence length="199" mass="21824">MAISLEKGQRIDLTKGKAGLSKLMVGLGWDPVSSGGGFFSKLLGGGGPNIDCDASVLMLENGKFTDKKNLIYFGNLKSRCGGVQHTGDNLTGDGAGDDEQIMIDLDKVPGNIDKLVFVVNIYDCVRRKQDFGMIQNAFIRVVDQSNHEEMLKYNLRDNYAGRTSLITAEIYRSGSEWKFAAVGEGTNDTRLEDIISRYV</sequence>
<feature type="initiator methionine" description="Removed" evidence="1">
    <location>
        <position position="1"/>
    </location>
</feature>
<feature type="chain" id="PRO_0000170784" description="Stress response protein SCP2">
    <location>
        <begin position="2"/>
        <end position="199"/>
    </location>
</feature>
<evidence type="ECO:0000269" key="1">
    <source ref="3"/>
</evidence>
<evidence type="ECO:0000305" key="2"/>
<reference key="1">
    <citation type="journal article" date="1997" name="Microbiology">
        <title>A 32 kb nucleotide sequence from the region of the lincomycin-resistance gene (22 degrees-25 degrees) of the Bacillus subtilis chromosome and identification of the site of the lin-2 mutation.</title>
        <authorList>
            <person name="Kumano M."/>
            <person name="Tamakoshi A."/>
            <person name="Yamane K."/>
        </authorList>
    </citation>
    <scope>NUCLEOTIDE SEQUENCE [GENOMIC DNA]</scope>
    <source>
        <strain>168</strain>
    </source>
</reference>
<reference key="2">
    <citation type="journal article" date="1997" name="Nature">
        <title>The complete genome sequence of the Gram-positive bacterium Bacillus subtilis.</title>
        <authorList>
            <person name="Kunst F."/>
            <person name="Ogasawara N."/>
            <person name="Moszer I."/>
            <person name="Albertini A.M."/>
            <person name="Alloni G."/>
            <person name="Azevedo V."/>
            <person name="Bertero M.G."/>
            <person name="Bessieres P."/>
            <person name="Bolotin A."/>
            <person name="Borchert S."/>
            <person name="Borriss R."/>
            <person name="Boursier L."/>
            <person name="Brans A."/>
            <person name="Braun M."/>
            <person name="Brignell S.C."/>
            <person name="Bron S."/>
            <person name="Brouillet S."/>
            <person name="Bruschi C.V."/>
            <person name="Caldwell B."/>
            <person name="Capuano V."/>
            <person name="Carter N.M."/>
            <person name="Choi S.-K."/>
            <person name="Codani J.-J."/>
            <person name="Connerton I.F."/>
            <person name="Cummings N.J."/>
            <person name="Daniel R.A."/>
            <person name="Denizot F."/>
            <person name="Devine K.M."/>
            <person name="Duesterhoeft A."/>
            <person name="Ehrlich S.D."/>
            <person name="Emmerson P.T."/>
            <person name="Entian K.-D."/>
            <person name="Errington J."/>
            <person name="Fabret C."/>
            <person name="Ferrari E."/>
            <person name="Foulger D."/>
            <person name="Fritz C."/>
            <person name="Fujita M."/>
            <person name="Fujita Y."/>
            <person name="Fuma S."/>
            <person name="Galizzi A."/>
            <person name="Galleron N."/>
            <person name="Ghim S.-Y."/>
            <person name="Glaser P."/>
            <person name="Goffeau A."/>
            <person name="Golightly E.J."/>
            <person name="Grandi G."/>
            <person name="Guiseppi G."/>
            <person name="Guy B.J."/>
            <person name="Haga K."/>
            <person name="Haiech J."/>
            <person name="Harwood C.R."/>
            <person name="Henaut A."/>
            <person name="Hilbert H."/>
            <person name="Holsappel S."/>
            <person name="Hosono S."/>
            <person name="Hullo M.-F."/>
            <person name="Itaya M."/>
            <person name="Jones L.-M."/>
            <person name="Joris B."/>
            <person name="Karamata D."/>
            <person name="Kasahara Y."/>
            <person name="Klaerr-Blanchard M."/>
            <person name="Klein C."/>
            <person name="Kobayashi Y."/>
            <person name="Koetter P."/>
            <person name="Koningstein G."/>
            <person name="Krogh S."/>
            <person name="Kumano M."/>
            <person name="Kurita K."/>
            <person name="Lapidus A."/>
            <person name="Lardinois S."/>
            <person name="Lauber J."/>
            <person name="Lazarevic V."/>
            <person name="Lee S.-M."/>
            <person name="Levine A."/>
            <person name="Liu H."/>
            <person name="Masuda S."/>
            <person name="Mauel C."/>
            <person name="Medigue C."/>
            <person name="Medina N."/>
            <person name="Mellado R.P."/>
            <person name="Mizuno M."/>
            <person name="Moestl D."/>
            <person name="Nakai S."/>
            <person name="Noback M."/>
            <person name="Noone D."/>
            <person name="O'Reilly M."/>
            <person name="Ogawa K."/>
            <person name="Ogiwara A."/>
            <person name="Oudega B."/>
            <person name="Park S.-H."/>
            <person name="Parro V."/>
            <person name="Pohl T.M."/>
            <person name="Portetelle D."/>
            <person name="Porwollik S."/>
            <person name="Prescott A.M."/>
            <person name="Presecan E."/>
            <person name="Pujic P."/>
            <person name="Purnelle B."/>
            <person name="Rapoport G."/>
            <person name="Rey M."/>
            <person name="Reynolds S."/>
            <person name="Rieger M."/>
            <person name="Rivolta C."/>
            <person name="Rocha E."/>
            <person name="Roche B."/>
            <person name="Rose M."/>
            <person name="Sadaie Y."/>
            <person name="Sato T."/>
            <person name="Scanlan E."/>
            <person name="Schleich S."/>
            <person name="Schroeter R."/>
            <person name="Scoffone F."/>
            <person name="Sekiguchi J."/>
            <person name="Sekowska A."/>
            <person name="Seror S.J."/>
            <person name="Serror P."/>
            <person name="Shin B.-S."/>
            <person name="Soldo B."/>
            <person name="Sorokin A."/>
            <person name="Tacconi E."/>
            <person name="Takagi T."/>
            <person name="Takahashi H."/>
            <person name="Takemaru K."/>
            <person name="Takeuchi M."/>
            <person name="Tamakoshi A."/>
            <person name="Tanaka T."/>
            <person name="Terpstra P."/>
            <person name="Tognoni A."/>
            <person name="Tosato V."/>
            <person name="Uchiyama S."/>
            <person name="Vandenbol M."/>
            <person name="Vannier F."/>
            <person name="Vassarotti A."/>
            <person name="Viari A."/>
            <person name="Wambutt R."/>
            <person name="Wedler E."/>
            <person name="Wedler H."/>
            <person name="Weitzenegger T."/>
            <person name="Winters P."/>
            <person name="Wipat A."/>
            <person name="Yamamoto H."/>
            <person name="Yamane K."/>
            <person name="Yasumoto K."/>
            <person name="Yata K."/>
            <person name="Yoshida K."/>
            <person name="Yoshikawa H.-F."/>
            <person name="Zumstein E."/>
            <person name="Yoshikawa H."/>
            <person name="Danchin A."/>
        </authorList>
    </citation>
    <scope>NUCLEOTIDE SEQUENCE [LARGE SCALE GENOMIC DNA]</scope>
    <source>
        <strain>168</strain>
    </source>
</reference>
<reference key="3">
    <citation type="submission" date="1997-10" db="UniProtKB">
        <authorList>
            <person name="Graumann P.L."/>
            <person name="Schmid R."/>
            <person name="Marahiel M.A."/>
        </authorList>
    </citation>
    <scope>PROTEIN SEQUENCE OF 2-28</scope>
    <source>
        <strain>168 / JH642</strain>
    </source>
</reference>
<reference key="4">
    <citation type="journal article" date="1996" name="J. Bacteriol.">
        <title>Cold shock stress-induced proteins in Bacillus subtilis.</title>
        <authorList>
            <person name="Graumann P."/>
            <person name="Schroeder K."/>
            <person name="Schmid R."/>
            <person name="Marahiel M.A."/>
        </authorList>
    </citation>
    <scope>CHARACTERIZATION</scope>
    <source>
        <strain>168 / JH642</strain>
    </source>
</reference>
<dbReference type="EMBL" id="AB000617">
    <property type="protein sequence ID" value="BAA22250.1"/>
    <property type="molecule type" value="Genomic_DNA"/>
</dbReference>
<dbReference type="EMBL" id="AL009126">
    <property type="protein sequence ID" value="CAB12083.1"/>
    <property type="molecule type" value="Genomic_DNA"/>
</dbReference>
<dbReference type="PIR" id="E69756">
    <property type="entry name" value="E69756"/>
</dbReference>
<dbReference type="RefSeq" id="NP_388171.1">
    <property type="nucleotide sequence ID" value="NC_000964.3"/>
</dbReference>
<dbReference type="RefSeq" id="WP_003246350.1">
    <property type="nucleotide sequence ID" value="NZ_OZ025638.1"/>
</dbReference>
<dbReference type="SMR" id="P81100"/>
<dbReference type="FunCoup" id="P81100">
    <property type="interactions" value="15"/>
</dbReference>
<dbReference type="IntAct" id="P81100">
    <property type="interactions" value="1"/>
</dbReference>
<dbReference type="MINT" id="P81100"/>
<dbReference type="STRING" id="224308.BSU02890"/>
<dbReference type="jPOST" id="P81100"/>
<dbReference type="PaxDb" id="224308-BSU02890"/>
<dbReference type="EnsemblBacteria" id="CAB12083">
    <property type="protein sequence ID" value="CAB12083"/>
    <property type="gene ID" value="BSU_02890"/>
</dbReference>
<dbReference type="GeneID" id="938372"/>
<dbReference type="KEGG" id="bsu:BSU02890"/>
<dbReference type="PATRIC" id="fig|224308.179.peg.301"/>
<dbReference type="eggNOG" id="COG2310">
    <property type="taxonomic scope" value="Bacteria"/>
</dbReference>
<dbReference type="InParanoid" id="P81100"/>
<dbReference type="OrthoDB" id="4123258at2"/>
<dbReference type="PhylomeDB" id="P81100"/>
<dbReference type="BioCyc" id="BSUB:BSU02890-MONOMER"/>
<dbReference type="Proteomes" id="UP000001570">
    <property type="component" value="Chromosome"/>
</dbReference>
<dbReference type="GO" id="GO:0005737">
    <property type="term" value="C:cytoplasm"/>
    <property type="evidence" value="ECO:0007669"/>
    <property type="project" value="UniProtKB-SubCell"/>
</dbReference>
<dbReference type="CDD" id="cd06974">
    <property type="entry name" value="TerD_like"/>
    <property type="match status" value="1"/>
</dbReference>
<dbReference type="Gene3D" id="2.60.60.30">
    <property type="entry name" value="sav2460 like domains"/>
    <property type="match status" value="1"/>
</dbReference>
<dbReference type="InterPro" id="IPR051324">
    <property type="entry name" value="Stress/Tellurium_Resist"/>
</dbReference>
<dbReference type="InterPro" id="IPR003325">
    <property type="entry name" value="TerD"/>
</dbReference>
<dbReference type="PANTHER" id="PTHR32097">
    <property type="entry name" value="CAMP-BINDING PROTEIN 1-RELATED"/>
    <property type="match status" value="1"/>
</dbReference>
<dbReference type="PANTHER" id="PTHR32097:SF15">
    <property type="entry name" value="STRESS RESPONSE PROTEIN SCP2"/>
    <property type="match status" value="1"/>
</dbReference>
<dbReference type="Pfam" id="PF02342">
    <property type="entry name" value="TerD"/>
    <property type="match status" value="1"/>
</dbReference>
<keyword id="KW-0963">Cytoplasm</keyword>
<keyword id="KW-0903">Direct protein sequencing</keyword>
<keyword id="KW-1185">Reference proteome</keyword>
<keyword id="KW-0346">Stress response</keyword>
<proteinExistence type="evidence at protein level"/>
<organism>
    <name type="scientific">Bacillus subtilis (strain 168)</name>
    <dbReference type="NCBI Taxonomy" id="224308"/>
    <lineage>
        <taxon>Bacteria</taxon>
        <taxon>Bacillati</taxon>
        <taxon>Bacillota</taxon>
        <taxon>Bacilli</taxon>
        <taxon>Bacillales</taxon>
        <taxon>Bacillaceae</taxon>
        <taxon>Bacillus</taxon>
    </lineage>
</organism>
<protein>
    <recommendedName>
        <fullName>Stress response protein SCP2</fullName>
    </recommendedName>
</protein>